<proteinExistence type="inferred from homology"/>
<protein>
    <recommendedName>
        <fullName evidence="1">NADH-quinone oxidoreductase subunit K 1</fullName>
        <ecNumber evidence="1">7.1.1.-</ecNumber>
    </recommendedName>
    <alternativeName>
        <fullName evidence="1">NADH dehydrogenase I subunit K 1</fullName>
    </alternativeName>
    <alternativeName>
        <fullName evidence="1">NDH-1 subunit K 1</fullName>
    </alternativeName>
</protein>
<sequence>MEIGISHYLTVSAILFTLGVFGIFLNRKNVIIILMSVELILLAVNINMVAFSAFLNDITGQVFALFILTVAAAEAAIGLAILVVFYRNRGSIAVEDVNMMKG</sequence>
<reference key="1">
    <citation type="journal article" date="2009" name="Appl. Environ. Microbiol.">
        <title>Rhizobium sp. strain NGR234 possesses a remarkable number of secretion systems.</title>
        <authorList>
            <person name="Schmeisser C."/>
            <person name="Liesegang H."/>
            <person name="Krysciak D."/>
            <person name="Bakkou N."/>
            <person name="Le Quere A."/>
            <person name="Wollherr A."/>
            <person name="Heinemeyer I."/>
            <person name="Morgenstern B."/>
            <person name="Pommerening-Roeser A."/>
            <person name="Flores M."/>
            <person name="Palacios R."/>
            <person name="Brenner S."/>
            <person name="Gottschalk G."/>
            <person name="Schmitz R.A."/>
            <person name="Broughton W.J."/>
            <person name="Perret X."/>
            <person name="Strittmatter A.W."/>
            <person name="Streit W.R."/>
        </authorList>
    </citation>
    <scope>NUCLEOTIDE SEQUENCE [LARGE SCALE GENOMIC DNA]</scope>
    <source>
        <strain>NBRC 101917 / NGR234</strain>
    </source>
</reference>
<comment type="function">
    <text evidence="1">NDH-1 shuttles electrons from NADH, via FMN and iron-sulfur (Fe-S) centers, to quinones in the respiratory chain. The immediate electron acceptor for the enzyme in this species is believed to be ubiquinone. Couples the redox reaction to proton translocation (for every two electrons transferred, four hydrogen ions are translocated across the cytoplasmic membrane), and thus conserves the redox energy in a proton gradient.</text>
</comment>
<comment type="catalytic activity">
    <reaction evidence="1">
        <text>a quinone + NADH + 5 H(+)(in) = a quinol + NAD(+) + 4 H(+)(out)</text>
        <dbReference type="Rhea" id="RHEA:57888"/>
        <dbReference type="ChEBI" id="CHEBI:15378"/>
        <dbReference type="ChEBI" id="CHEBI:24646"/>
        <dbReference type="ChEBI" id="CHEBI:57540"/>
        <dbReference type="ChEBI" id="CHEBI:57945"/>
        <dbReference type="ChEBI" id="CHEBI:132124"/>
    </reaction>
</comment>
<comment type="subunit">
    <text evidence="1">NDH-1 is composed of 14 different subunits. Subunits NuoA, H, J, K, L, M, N constitute the membrane sector of the complex.</text>
</comment>
<comment type="subcellular location">
    <subcellularLocation>
        <location evidence="1">Cell inner membrane</location>
        <topology evidence="1">Multi-pass membrane protein</topology>
    </subcellularLocation>
</comment>
<comment type="similarity">
    <text evidence="1">Belongs to the complex I subunit 4L family.</text>
</comment>
<name>NUOK1_SINFN</name>
<gene>
    <name evidence="1" type="primary">nuoK1</name>
    <name type="ordered locus">NGR_c10600</name>
</gene>
<accession>C3MA67</accession>
<organism>
    <name type="scientific">Sinorhizobium fredii (strain NBRC 101917 / NGR234)</name>
    <dbReference type="NCBI Taxonomy" id="394"/>
    <lineage>
        <taxon>Bacteria</taxon>
        <taxon>Pseudomonadati</taxon>
        <taxon>Pseudomonadota</taxon>
        <taxon>Alphaproteobacteria</taxon>
        <taxon>Hyphomicrobiales</taxon>
        <taxon>Rhizobiaceae</taxon>
        <taxon>Sinorhizobium/Ensifer group</taxon>
        <taxon>Sinorhizobium</taxon>
    </lineage>
</organism>
<feature type="chain" id="PRO_0000390198" description="NADH-quinone oxidoreductase subunit K 1">
    <location>
        <begin position="1"/>
        <end position="102"/>
    </location>
</feature>
<feature type="transmembrane region" description="Helical" evidence="1">
    <location>
        <begin position="5"/>
        <end position="25"/>
    </location>
</feature>
<feature type="transmembrane region" description="Helical" evidence="1">
    <location>
        <begin position="31"/>
        <end position="51"/>
    </location>
</feature>
<feature type="transmembrane region" description="Helical" evidence="1">
    <location>
        <begin position="65"/>
        <end position="85"/>
    </location>
</feature>
<evidence type="ECO:0000255" key="1">
    <source>
        <dbReference type="HAMAP-Rule" id="MF_01456"/>
    </source>
</evidence>
<dbReference type="EC" id="7.1.1.-" evidence="1"/>
<dbReference type="EMBL" id="CP001389">
    <property type="protein sequence ID" value="ACP24846.1"/>
    <property type="molecule type" value="Genomic_DNA"/>
</dbReference>
<dbReference type="RefSeq" id="YP_002825599.1">
    <property type="nucleotide sequence ID" value="NC_012587.1"/>
</dbReference>
<dbReference type="SMR" id="C3MA67"/>
<dbReference type="STRING" id="394.NGR_c10600"/>
<dbReference type="KEGG" id="rhi:NGR_c10600"/>
<dbReference type="PATRIC" id="fig|394.7.peg.3882"/>
<dbReference type="eggNOG" id="COG0713">
    <property type="taxonomic scope" value="Bacteria"/>
</dbReference>
<dbReference type="HOGENOM" id="CLU_144724_2_0_5"/>
<dbReference type="OrthoDB" id="9811124at2"/>
<dbReference type="Proteomes" id="UP000001054">
    <property type="component" value="Chromosome"/>
</dbReference>
<dbReference type="GO" id="GO:0030964">
    <property type="term" value="C:NADH dehydrogenase complex"/>
    <property type="evidence" value="ECO:0007669"/>
    <property type="project" value="TreeGrafter"/>
</dbReference>
<dbReference type="GO" id="GO:0005886">
    <property type="term" value="C:plasma membrane"/>
    <property type="evidence" value="ECO:0007669"/>
    <property type="project" value="UniProtKB-SubCell"/>
</dbReference>
<dbReference type="GO" id="GO:0050136">
    <property type="term" value="F:NADH:ubiquinone reductase (non-electrogenic) activity"/>
    <property type="evidence" value="ECO:0007669"/>
    <property type="project" value="UniProtKB-UniRule"/>
</dbReference>
<dbReference type="GO" id="GO:0048038">
    <property type="term" value="F:quinone binding"/>
    <property type="evidence" value="ECO:0007669"/>
    <property type="project" value="UniProtKB-KW"/>
</dbReference>
<dbReference type="GO" id="GO:0042773">
    <property type="term" value="P:ATP synthesis coupled electron transport"/>
    <property type="evidence" value="ECO:0007669"/>
    <property type="project" value="InterPro"/>
</dbReference>
<dbReference type="FunFam" id="1.10.287.3510:FF:000001">
    <property type="entry name" value="NADH-quinone oxidoreductase subunit K"/>
    <property type="match status" value="1"/>
</dbReference>
<dbReference type="Gene3D" id="1.10.287.3510">
    <property type="match status" value="1"/>
</dbReference>
<dbReference type="HAMAP" id="MF_01456">
    <property type="entry name" value="NDH1_NuoK"/>
    <property type="match status" value="1"/>
</dbReference>
<dbReference type="InterPro" id="IPR001133">
    <property type="entry name" value="NADH_UbQ_OxRdtase_chain4L/K"/>
</dbReference>
<dbReference type="InterPro" id="IPR039428">
    <property type="entry name" value="NUOK/Mnh_C1-like"/>
</dbReference>
<dbReference type="NCBIfam" id="NF004320">
    <property type="entry name" value="PRK05715.1-2"/>
    <property type="match status" value="1"/>
</dbReference>
<dbReference type="NCBIfam" id="NF004321">
    <property type="entry name" value="PRK05715.1-3"/>
    <property type="match status" value="1"/>
</dbReference>
<dbReference type="NCBIfam" id="NF004323">
    <property type="entry name" value="PRK05715.1-5"/>
    <property type="match status" value="1"/>
</dbReference>
<dbReference type="PANTHER" id="PTHR11434:SF21">
    <property type="entry name" value="NADH DEHYDROGENASE SUBUNIT 4L-RELATED"/>
    <property type="match status" value="1"/>
</dbReference>
<dbReference type="PANTHER" id="PTHR11434">
    <property type="entry name" value="NADH-UBIQUINONE OXIDOREDUCTASE SUBUNIT ND4L"/>
    <property type="match status" value="1"/>
</dbReference>
<dbReference type="Pfam" id="PF00420">
    <property type="entry name" value="Oxidored_q2"/>
    <property type="match status" value="1"/>
</dbReference>
<keyword id="KW-0997">Cell inner membrane</keyword>
<keyword id="KW-1003">Cell membrane</keyword>
<keyword id="KW-0472">Membrane</keyword>
<keyword id="KW-0520">NAD</keyword>
<keyword id="KW-0874">Quinone</keyword>
<keyword id="KW-1185">Reference proteome</keyword>
<keyword id="KW-1278">Translocase</keyword>
<keyword id="KW-0812">Transmembrane</keyword>
<keyword id="KW-1133">Transmembrane helix</keyword>
<keyword id="KW-0813">Transport</keyword>
<keyword id="KW-0830">Ubiquinone</keyword>